<keyword id="KW-0067">ATP-binding</keyword>
<keyword id="KW-0133">Cell shape</keyword>
<keyword id="KW-0961">Cell wall biogenesis/degradation</keyword>
<keyword id="KW-0963">Cytoplasm</keyword>
<keyword id="KW-0436">Ligase</keyword>
<keyword id="KW-0460">Magnesium</keyword>
<keyword id="KW-0464">Manganese</keyword>
<keyword id="KW-0479">Metal-binding</keyword>
<keyword id="KW-0547">Nucleotide-binding</keyword>
<keyword id="KW-0573">Peptidoglycan synthesis</keyword>
<accession>B1L9P4</accession>
<reference key="1">
    <citation type="journal article" date="2011" name="J. Bacteriol.">
        <title>Genome sequence of Thermotoga sp. strain RQ2, a hyperthermophilic bacterium isolated from a geothermally heated region of the seafloor near Ribeira Quente, the Azores.</title>
        <authorList>
            <person name="Swithers K.S."/>
            <person name="DiPippo J.L."/>
            <person name="Bruce D.C."/>
            <person name="Detter C."/>
            <person name="Tapia R."/>
            <person name="Han S."/>
            <person name="Saunders E."/>
            <person name="Goodwin L.A."/>
            <person name="Han J."/>
            <person name="Woyke T."/>
            <person name="Pitluck S."/>
            <person name="Pennacchio L."/>
            <person name="Nolan M."/>
            <person name="Mikhailova N."/>
            <person name="Lykidis A."/>
            <person name="Land M.L."/>
            <person name="Brettin T."/>
            <person name="Stetter K.O."/>
            <person name="Nelson K.E."/>
            <person name="Gogarten J.P."/>
            <person name="Noll K.M."/>
        </authorList>
    </citation>
    <scope>NUCLEOTIDE SEQUENCE [LARGE SCALE GENOMIC DNA]</scope>
    <source>
        <strain>RQ2</strain>
    </source>
</reference>
<protein>
    <recommendedName>
        <fullName evidence="2">D-alanine--D-alanine ligase</fullName>
        <ecNumber evidence="2">6.3.2.4</ecNumber>
    </recommendedName>
    <alternativeName>
        <fullName evidence="2">D-Ala-D-Ala ligase</fullName>
    </alternativeName>
    <alternativeName>
        <fullName evidence="2">D-alanylalanine synthetase</fullName>
    </alternativeName>
</protein>
<proteinExistence type="inferred from homology"/>
<organism>
    <name type="scientific">Thermotoga sp. (strain RQ2)</name>
    <dbReference type="NCBI Taxonomy" id="126740"/>
    <lineage>
        <taxon>Bacteria</taxon>
        <taxon>Thermotogati</taxon>
        <taxon>Thermotogota</taxon>
        <taxon>Thermotogae</taxon>
        <taxon>Thermotogales</taxon>
        <taxon>Thermotogaceae</taxon>
        <taxon>Thermotoga</taxon>
    </lineage>
</organism>
<gene>
    <name evidence="2" type="primary">ddl</name>
    <name type="ordered locus">TRQ2_0689</name>
</gene>
<evidence type="ECO:0000250" key="1"/>
<evidence type="ECO:0000255" key="2">
    <source>
        <dbReference type="HAMAP-Rule" id="MF_00047"/>
    </source>
</evidence>
<dbReference type="EC" id="6.3.2.4" evidence="2"/>
<dbReference type="EMBL" id="CP000969">
    <property type="protein sequence ID" value="ACB09042.1"/>
    <property type="molecule type" value="Genomic_DNA"/>
</dbReference>
<dbReference type="RefSeq" id="WP_010865083.1">
    <property type="nucleotide sequence ID" value="NC_010483.1"/>
</dbReference>
<dbReference type="SMR" id="B1L9P4"/>
<dbReference type="KEGG" id="trq:TRQ2_0689"/>
<dbReference type="HOGENOM" id="CLU_039268_1_1_0"/>
<dbReference type="UniPathway" id="UPA00219"/>
<dbReference type="Proteomes" id="UP000001687">
    <property type="component" value="Chromosome"/>
</dbReference>
<dbReference type="GO" id="GO:0005737">
    <property type="term" value="C:cytoplasm"/>
    <property type="evidence" value="ECO:0007669"/>
    <property type="project" value="UniProtKB-SubCell"/>
</dbReference>
<dbReference type="GO" id="GO:0005524">
    <property type="term" value="F:ATP binding"/>
    <property type="evidence" value="ECO:0007669"/>
    <property type="project" value="UniProtKB-KW"/>
</dbReference>
<dbReference type="GO" id="GO:0008716">
    <property type="term" value="F:D-alanine-D-alanine ligase activity"/>
    <property type="evidence" value="ECO:0007669"/>
    <property type="project" value="UniProtKB-UniRule"/>
</dbReference>
<dbReference type="GO" id="GO:0046872">
    <property type="term" value="F:metal ion binding"/>
    <property type="evidence" value="ECO:0007669"/>
    <property type="project" value="UniProtKB-KW"/>
</dbReference>
<dbReference type="GO" id="GO:0071555">
    <property type="term" value="P:cell wall organization"/>
    <property type="evidence" value="ECO:0007669"/>
    <property type="project" value="UniProtKB-KW"/>
</dbReference>
<dbReference type="GO" id="GO:0009252">
    <property type="term" value="P:peptidoglycan biosynthetic process"/>
    <property type="evidence" value="ECO:0007669"/>
    <property type="project" value="UniProtKB-UniRule"/>
</dbReference>
<dbReference type="GO" id="GO:0008360">
    <property type="term" value="P:regulation of cell shape"/>
    <property type="evidence" value="ECO:0007669"/>
    <property type="project" value="UniProtKB-KW"/>
</dbReference>
<dbReference type="FunFam" id="3.30.1490.20:FF:000057">
    <property type="entry name" value="D-alanine--D-alanine ligase"/>
    <property type="match status" value="1"/>
</dbReference>
<dbReference type="FunFam" id="3.30.470.20:FF:000008">
    <property type="entry name" value="D-alanine--D-alanine ligase"/>
    <property type="match status" value="1"/>
</dbReference>
<dbReference type="Gene3D" id="3.40.50.20">
    <property type="match status" value="1"/>
</dbReference>
<dbReference type="Gene3D" id="3.30.1490.20">
    <property type="entry name" value="ATP-grasp fold, A domain"/>
    <property type="match status" value="1"/>
</dbReference>
<dbReference type="Gene3D" id="3.30.470.20">
    <property type="entry name" value="ATP-grasp fold, B domain"/>
    <property type="match status" value="1"/>
</dbReference>
<dbReference type="HAMAP" id="MF_00047">
    <property type="entry name" value="Dala_Dala_lig"/>
    <property type="match status" value="1"/>
</dbReference>
<dbReference type="InterPro" id="IPR011761">
    <property type="entry name" value="ATP-grasp"/>
</dbReference>
<dbReference type="InterPro" id="IPR013815">
    <property type="entry name" value="ATP_grasp_subdomain_1"/>
</dbReference>
<dbReference type="InterPro" id="IPR000291">
    <property type="entry name" value="D-Ala_lig_Van_CS"/>
</dbReference>
<dbReference type="InterPro" id="IPR005905">
    <property type="entry name" value="D_ala_D_ala"/>
</dbReference>
<dbReference type="InterPro" id="IPR011095">
    <property type="entry name" value="Dala_Dala_lig_C"/>
</dbReference>
<dbReference type="InterPro" id="IPR011127">
    <property type="entry name" value="Dala_Dala_lig_N"/>
</dbReference>
<dbReference type="InterPro" id="IPR016185">
    <property type="entry name" value="PreATP-grasp_dom_sf"/>
</dbReference>
<dbReference type="NCBIfam" id="TIGR01205">
    <property type="entry name" value="D_ala_D_alaTIGR"/>
    <property type="match status" value="1"/>
</dbReference>
<dbReference type="NCBIfam" id="NF002378">
    <property type="entry name" value="PRK01372.1"/>
    <property type="match status" value="1"/>
</dbReference>
<dbReference type="NCBIfam" id="NF011169">
    <property type="entry name" value="PRK14571.1"/>
    <property type="match status" value="1"/>
</dbReference>
<dbReference type="PANTHER" id="PTHR23132">
    <property type="entry name" value="D-ALANINE--D-ALANINE LIGASE"/>
    <property type="match status" value="1"/>
</dbReference>
<dbReference type="PANTHER" id="PTHR23132:SF23">
    <property type="entry name" value="D-ALANINE--D-ALANINE LIGASE B"/>
    <property type="match status" value="1"/>
</dbReference>
<dbReference type="Pfam" id="PF07478">
    <property type="entry name" value="Dala_Dala_lig_C"/>
    <property type="match status" value="1"/>
</dbReference>
<dbReference type="Pfam" id="PF01820">
    <property type="entry name" value="Dala_Dala_lig_N"/>
    <property type="match status" value="1"/>
</dbReference>
<dbReference type="PIRSF" id="PIRSF039102">
    <property type="entry name" value="Ddl/VanB"/>
    <property type="match status" value="1"/>
</dbReference>
<dbReference type="SUPFAM" id="SSF56059">
    <property type="entry name" value="Glutathione synthetase ATP-binding domain-like"/>
    <property type="match status" value="1"/>
</dbReference>
<dbReference type="SUPFAM" id="SSF52440">
    <property type="entry name" value="PreATP-grasp domain"/>
    <property type="match status" value="1"/>
</dbReference>
<dbReference type="PROSITE" id="PS50975">
    <property type="entry name" value="ATP_GRASP"/>
    <property type="match status" value="1"/>
</dbReference>
<dbReference type="PROSITE" id="PS00843">
    <property type="entry name" value="DALA_DALA_LIGASE_1"/>
    <property type="match status" value="1"/>
</dbReference>
<dbReference type="PROSITE" id="PS00844">
    <property type="entry name" value="DALA_DALA_LIGASE_2"/>
    <property type="match status" value="1"/>
</dbReference>
<feature type="chain" id="PRO_0000341186" description="D-alanine--D-alanine ligase">
    <location>
        <begin position="1"/>
        <end position="303"/>
    </location>
</feature>
<feature type="domain" description="ATP-grasp" evidence="2">
    <location>
        <begin position="99"/>
        <end position="293"/>
    </location>
</feature>
<feature type="binding site" evidence="2">
    <location>
        <begin position="125"/>
        <end position="176"/>
    </location>
    <ligand>
        <name>ATP</name>
        <dbReference type="ChEBI" id="CHEBI:30616"/>
    </ligand>
</feature>
<feature type="binding site" evidence="2">
    <location>
        <position position="248"/>
    </location>
    <ligand>
        <name>Mg(2+)</name>
        <dbReference type="ChEBI" id="CHEBI:18420"/>
        <label>1</label>
    </ligand>
</feature>
<feature type="binding site" evidence="2">
    <location>
        <position position="260"/>
    </location>
    <ligand>
        <name>Mg(2+)</name>
        <dbReference type="ChEBI" id="CHEBI:18420"/>
        <label>1</label>
    </ligand>
</feature>
<feature type="binding site" evidence="2">
    <location>
        <position position="260"/>
    </location>
    <ligand>
        <name>Mg(2+)</name>
        <dbReference type="ChEBI" id="CHEBI:18420"/>
        <label>2</label>
    </ligand>
</feature>
<feature type="binding site" evidence="2">
    <location>
        <position position="262"/>
    </location>
    <ligand>
        <name>Mg(2+)</name>
        <dbReference type="ChEBI" id="CHEBI:18420"/>
        <label>2</label>
    </ligand>
</feature>
<comment type="function">
    <text evidence="2">Cell wall formation.</text>
</comment>
<comment type="catalytic activity">
    <reaction evidence="2">
        <text>2 D-alanine + ATP = D-alanyl-D-alanine + ADP + phosphate + H(+)</text>
        <dbReference type="Rhea" id="RHEA:11224"/>
        <dbReference type="ChEBI" id="CHEBI:15378"/>
        <dbReference type="ChEBI" id="CHEBI:30616"/>
        <dbReference type="ChEBI" id="CHEBI:43474"/>
        <dbReference type="ChEBI" id="CHEBI:57416"/>
        <dbReference type="ChEBI" id="CHEBI:57822"/>
        <dbReference type="ChEBI" id="CHEBI:456216"/>
        <dbReference type="EC" id="6.3.2.4"/>
    </reaction>
</comment>
<comment type="cofactor">
    <cofactor evidence="1">
        <name>Mg(2+)</name>
        <dbReference type="ChEBI" id="CHEBI:18420"/>
    </cofactor>
    <cofactor evidence="1">
        <name>Mn(2+)</name>
        <dbReference type="ChEBI" id="CHEBI:29035"/>
    </cofactor>
    <text evidence="1">Binds 2 magnesium or manganese ions per subunit.</text>
</comment>
<comment type="pathway">
    <text evidence="2">Cell wall biogenesis; peptidoglycan biosynthesis.</text>
</comment>
<comment type="subcellular location">
    <subcellularLocation>
        <location evidence="2">Cytoplasm</location>
    </subcellularLocation>
</comment>
<comment type="similarity">
    <text evidence="2">Belongs to the D-alanine--D-alanine ligase family.</text>
</comment>
<sequence length="303" mass="34250">MRVALLMGGVSREREISLRSGERVKKALEKLGYEHTVFDVREDFLKKVDQLKSFDVVFNVLHGTFGEDGTLQAILDFLGIRYTGSDAFSSMICFDKLVTYRFLKGTVEIPDFVEIKEFMKTSPLGYPCVVKPRREGSSIGVFVCESDEEFQHALKEDLPRYGSVIVQKYIPGREMTVSILETEKGFEILPVLELRPKRRFYDYVAKYTKGETEFILPAPLNPSEERLVKEMALKAFVEAGCRGFGRVDGIFSDGRFYFLEINTVPGLTETSDLPASAKAGGIEFEELVEIILKSAFLKEGVRV</sequence>
<name>DDL_THESQ</name>